<proteinExistence type="inferred from homology"/>
<protein>
    <recommendedName>
        <fullName evidence="1">UDP-N-acetylglucosamine--N-acetylmuramyl-(pentapeptide) pyrophosphoryl-undecaprenol N-acetylglucosamine transferase</fullName>
        <ecNumber evidence="1">2.4.1.227</ecNumber>
    </recommendedName>
    <alternativeName>
        <fullName evidence="1">Undecaprenyl-PP-MurNAc-pentapeptide-UDPGlcNAc GlcNAc transferase</fullName>
    </alternativeName>
</protein>
<organism>
    <name type="scientific">Leptospira borgpetersenii serovar Hardjo-bovis (strain L550)</name>
    <dbReference type="NCBI Taxonomy" id="355276"/>
    <lineage>
        <taxon>Bacteria</taxon>
        <taxon>Pseudomonadati</taxon>
        <taxon>Spirochaetota</taxon>
        <taxon>Spirochaetia</taxon>
        <taxon>Leptospirales</taxon>
        <taxon>Leptospiraceae</taxon>
        <taxon>Leptospira</taxon>
    </lineage>
</organism>
<gene>
    <name evidence="1" type="primary">murG</name>
    <name type="ordered locus">LBL_2603</name>
</gene>
<keyword id="KW-0131">Cell cycle</keyword>
<keyword id="KW-0132">Cell division</keyword>
<keyword id="KW-0997">Cell inner membrane</keyword>
<keyword id="KW-1003">Cell membrane</keyword>
<keyword id="KW-0133">Cell shape</keyword>
<keyword id="KW-0961">Cell wall biogenesis/degradation</keyword>
<keyword id="KW-0328">Glycosyltransferase</keyword>
<keyword id="KW-0472">Membrane</keyword>
<keyword id="KW-0573">Peptidoglycan synthesis</keyword>
<keyword id="KW-0808">Transferase</keyword>
<feature type="chain" id="PRO_0000315109" description="UDP-N-acetylglucosamine--N-acetylmuramyl-(pentapeptide) pyrophosphoryl-undecaprenol N-acetylglucosamine transferase">
    <location>
        <begin position="1"/>
        <end position="358"/>
    </location>
</feature>
<feature type="binding site" evidence="1">
    <location>
        <begin position="11"/>
        <end position="13"/>
    </location>
    <ligand>
        <name>UDP-N-acetyl-alpha-D-glucosamine</name>
        <dbReference type="ChEBI" id="CHEBI:57705"/>
    </ligand>
</feature>
<feature type="binding site" evidence="1">
    <location>
        <position position="124"/>
    </location>
    <ligand>
        <name>UDP-N-acetyl-alpha-D-glucosamine</name>
        <dbReference type="ChEBI" id="CHEBI:57705"/>
    </ligand>
</feature>
<feature type="binding site" evidence="1">
    <location>
        <position position="164"/>
    </location>
    <ligand>
        <name>UDP-N-acetyl-alpha-D-glucosamine</name>
        <dbReference type="ChEBI" id="CHEBI:57705"/>
    </ligand>
</feature>
<feature type="binding site" evidence="1">
    <location>
        <position position="195"/>
    </location>
    <ligand>
        <name>UDP-N-acetyl-alpha-D-glucosamine</name>
        <dbReference type="ChEBI" id="CHEBI:57705"/>
    </ligand>
</feature>
<feature type="binding site" evidence="1">
    <location>
        <position position="291"/>
    </location>
    <ligand>
        <name>UDP-N-acetyl-alpha-D-glucosamine</name>
        <dbReference type="ChEBI" id="CHEBI:57705"/>
    </ligand>
</feature>
<dbReference type="EC" id="2.4.1.227" evidence="1"/>
<dbReference type="EMBL" id="CP000348">
    <property type="protein sequence ID" value="ABJ79963.1"/>
    <property type="molecule type" value="Genomic_DNA"/>
</dbReference>
<dbReference type="RefSeq" id="WP_011670913.1">
    <property type="nucleotide sequence ID" value="NC_008508.1"/>
</dbReference>
<dbReference type="SMR" id="Q04Y82"/>
<dbReference type="CAZy" id="GT28">
    <property type="family name" value="Glycosyltransferase Family 28"/>
</dbReference>
<dbReference type="KEGG" id="lbl:LBL_2603"/>
<dbReference type="HOGENOM" id="CLU_037404_2_1_12"/>
<dbReference type="UniPathway" id="UPA00219"/>
<dbReference type="GO" id="GO:0005886">
    <property type="term" value="C:plasma membrane"/>
    <property type="evidence" value="ECO:0007669"/>
    <property type="project" value="UniProtKB-SubCell"/>
</dbReference>
<dbReference type="GO" id="GO:0051991">
    <property type="term" value="F:UDP-N-acetyl-D-glucosamine:N-acetylmuramoyl-L-alanyl-D-glutamyl-meso-2,6-diaminopimelyl-D-alanyl-D-alanine-diphosphoundecaprenol 4-beta-N-acetylglucosaminlytransferase activity"/>
    <property type="evidence" value="ECO:0007669"/>
    <property type="project" value="RHEA"/>
</dbReference>
<dbReference type="GO" id="GO:0050511">
    <property type="term" value="F:undecaprenyldiphospho-muramoylpentapeptide beta-N-acetylglucosaminyltransferase activity"/>
    <property type="evidence" value="ECO:0007669"/>
    <property type="project" value="UniProtKB-UniRule"/>
</dbReference>
<dbReference type="GO" id="GO:0005975">
    <property type="term" value="P:carbohydrate metabolic process"/>
    <property type="evidence" value="ECO:0007669"/>
    <property type="project" value="InterPro"/>
</dbReference>
<dbReference type="GO" id="GO:0051301">
    <property type="term" value="P:cell division"/>
    <property type="evidence" value="ECO:0007669"/>
    <property type="project" value="UniProtKB-KW"/>
</dbReference>
<dbReference type="GO" id="GO:0071555">
    <property type="term" value="P:cell wall organization"/>
    <property type="evidence" value="ECO:0007669"/>
    <property type="project" value="UniProtKB-KW"/>
</dbReference>
<dbReference type="GO" id="GO:0030259">
    <property type="term" value="P:lipid glycosylation"/>
    <property type="evidence" value="ECO:0007669"/>
    <property type="project" value="UniProtKB-UniRule"/>
</dbReference>
<dbReference type="GO" id="GO:0009252">
    <property type="term" value="P:peptidoglycan biosynthetic process"/>
    <property type="evidence" value="ECO:0007669"/>
    <property type="project" value="UniProtKB-UniRule"/>
</dbReference>
<dbReference type="GO" id="GO:0008360">
    <property type="term" value="P:regulation of cell shape"/>
    <property type="evidence" value="ECO:0007669"/>
    <property type="project" value="UniProtKB-KW"/>
</dbReference>
<dbReference type="CDD" id="cd03785">
    <property type="entry name" value="GT28_MurG"/>
    <property type="match status" value="1"/>
</dbReference>
<dbReference type="Gene3D" id="3.40.50.2000">
    <property type="entry name" value="Glycogen Phosphorylase B"/>
    <property type="match status" value="2"/>
</dbReference>
<dbReference type="HAMAP" id="MF_00033">
    <property type="entry name" value="MurG"/>
    <property type="match status" value="1"/>
</dbReference>
<dbReference type="InterPro" id="IPR006009">
    <property type="entry name" value="GlcNAc_MurG"/>
</dbReference>
<dbReference type="InterPro" id="IPR007235">
    <property type="entry name" value="Glyco_trans_28_C"/>
</dbReference>
<dbReference type="InterPro" id="IPR004276">
    <property type="entry name" value="GlycoTrans_28_N"/>
</dbReference>
<dbReference type="PANTHER" id="PTHR21015:SF22">
    <property type="entry name" value="GLYCOSYLTRANSFERASE"/>
    <property type="match status" value="1"/>
</dbReference>
<dbReference type="PANTHER" id="PTHR21015">
    <property type="entry name" value="UDP-N-ACETYLGLUCOSAMINE--N-ACETYLMURAMYL-(PENTAPEPTIDE) PYROPHOSPHORYL-UNDECAPRENOL N-ACETYLGLUCOSAMINE TRANSFERASE 1"/>
    <property type="match status" value="1"/>
</dbReference>
<dbReference type="Pfam" id="PF04101">
    <property type="entry name" value="Glyco_tran_28_C"/>
    <property type="match status" value="1"/>
</dbReference>
<dbReference type="Pfam" id="PF03033">
    <property type="entry name" value="Glyco_transf_28"/>
    <property type="match status" value="1"/>
</dbReference>
<dbReference type="SUPFAM" id="SSF53756">
    <property type="entry name" value="UDP-Glycosyltransferase/glycogen phosphorylase"/>
    <property type="match status" value="1"/>
</dbReference>
<reference key="1">
    <citation type="journal article" date="2006" name="Proc. Natl. Acad. Sci. U.S.A.">
        <title>Genome reduction in Leptospira borgpetersenii reflects limited transmission potential.</title>
        <authorList>
            <person name="Bulach D.M."/>
            <person name="Zuerner R.L."/>
            <person name="Wilson P."/>
            <person name="Seemann T."/>
            <person name="McGrath A."/>
            <person name="Cullen P.A."/>
            <person name="Davis J."/>
            <person name="Johnson M."/>
            <person name="Kuczek E."/>
            <person name="Alt D.P."/>
            <person name="Peterson-Burch B."/>
            <person name="Coppel R.L."/>
            <person name="Rood J.I."/>
            <person name="Davies J.K."/>
            <person name="Adler B."/>
        </authorList>
    </citation>
    <scope>NUCLEOTIDE SEQUENCE [LARGE SCALE GENOMIC DNA]</scope>
    <source>
        <strain>L550</strain>
    </source>
</reference>
<comment type="function">
    <text evidence="1">Cell wall formation. Catalyzes the transfer of a GlcNAc subunit on undecaprenyl-pyrophosphoryl-MurNAc-pentapeptide (lipid intermediate I) to form undecaprenyl-pyrophosphoryl-MurNAc-(pentapeptide)GlcNAc (lipid intermediate II).</text>
</comment>
<comment type="catalytic activity">
    <reaction evidence="1">
        <text>di-trans,octa-cis-undecaprenyl diphospho-N-acetyl-alpha-D-muramoyl-L-alanyl-D-glutamyl-meso-2,6-diaminopimeloyl-D-alanyl-D-alanine + UDP-N-acetyl-alpha-D-glucosamine = di-trans,octa-cis-undecaprenyl diphospho-[N-acetyl-alpha-D-glucosaminyl-(1-&gt;4)]-N-acetyl-alpha-D-muramoyl-L-alanyl-D-glutamyl-meso-2,6-diaminopimeloyl-D-alanyl-D-alanine + UDP + H(+)</text>
        <dbReference type="Rhea" id="RHEA:31227"/>
        <dbReference type="ChEBI" id="CHEBI:15378"/>
        <dbReference type="ChEBI" id="CHEBI:57705"/>
        <dbReference type="ChEBI" id="CHEBI:58223"/>
        <dbReference type="ChEBI" id="CHEBI:61387"/>
        <dbReference type="ChEBI" id="CHEBI:61388"/>
        <dbReference type="EC" id="2.4.1.227"/>
    </reaction>
</comment>
<comment type="pathway">
    <text evidence="1">Cell wall biogenesis; peptidoglycan biosynthesis.</text>
</comment>
<comment type="subcellular location">
    <subcellularLocation>
        <location evidence="1">Cell inner membrane</location>
        <topology evidence="1">Peripheral membrane protein</topology>
        <orientation evidence="1">Cytoplasmic side</orientation>
    </subcellularLocation>
</comment>
<comment type="similarity">
    <text evidence="1">Belongs to the glycosyltransferase 28 family. MurG subfamily.</text>
</comment>
<evidence type="ECO:0000255" key="1">
    <source>
        <dbReference type="HAMAP-Rule" id="MF_00033"/>
    </source>
</evidence>
<name>MURG_LEPBL</name>
<accession>Q04Y82</accession>
<sequence length="358" mass="40207">MRSIVIAAGGTGGHISPGVALAEVLTDLKEKIGYENLYLYSLIRNQNNPDLEQAPCPVLWHNLPPLSSNIFLFPFRYTIQILKTFLLFKKLNVDVVIGMGGYSTVSSILYGILFKKKIYLCEQNTVPGNVSRLFFRFANKAAFSFPPKNSAIPCDYQVLGNPLRKKTLPKMSLKFSEKYDTKKKTQFNVLVMGGSQGARQINNIVIALMGHEEINIQFRFRVLTGSALYEEVSKKTKKDAELISYSDNMKEHYEWANFVIARAGSGVLSECAAFALPMILIPYPYAKDDHQMANARYLELNGAAIVIDQKDEDESHLFKVLDQIANNVNLLNDMSISSLQCSHVDASKDTVKYFFSLD</sequence>